<protein>
    <recommendedName>
        <fullName evidence="1">Phenylalanine--tRNA ligase beta subunit</fullName>
        <ecNumber evidence="1">6.1.1.20</ecNumber>
    </recommendedName>
    <alternativeName>
        <fullName evidence="1">Phenylalanyl-tRNA synthetase beta subunit</fullName>
        <shortName evidence="1">PheRS</shortName>
    </alternativeName>
</protein>
<gene>
    <name evidence="1" type="primary">pheT</name>
    <name type="ordered locus">RB7112</name>
</gene>
<evidence type="ECO:0000255" key="1">
    <source>
        <dbReference type="HAMAP-Rule" id="MF_00283"/>
    </source>
</evidence>
<name>SYFB_RHOBA</name>
<keyword id="KW-0030">Aminoacyl-tRNA synthetase</keyword>
<keyword id="KW-0067">ATP-binding</keyword>
<keyword id="KW-0963">Cytoplasm</keyword>
<keyword id="KW-0436">Ligase</keyword>
<keyword id="KW-0460">Magnesium</keyword>
<keyword id="KW-0479">Metal-binding</keyword>
<keyword id="KW-0547">Nucleotide-binding</keyword>
<keyword id="KW-0648">Protein biosynthesis</keyword>
<keyword id="KW-1185">Reference proteome</keyword>
<proteinExistence type="inferred from homology"/>
<comment type="catalytic activity">
    <reaction evidence="1">
        <text>tRNA(Phe) + L-phenylalanine + ATP = L-phenylalanyl-tRNA(Phe) + AMP + diphosphate + H(+)</text>
        <dbReference type="Rhea" id="RHEA:19413"/>
        <dbReference type="Rhea" id="RHEA-COMP:9668"/>
        <dbReference type="Rhea" id="RHEA-COMP:9699"/>
        <dbReference type="ChEBI" id="CHEBI:15378"/>
        <dbReference type="ChEBI" id="CHEBI:30616"/>
        <dbReference type="ChEBI" id="CHEBI:33019"/>
        <dbReference type="ChEBI" id="CHEBI:58095"/>
        <dbReference type="ChEBI" id="CHEBI:78442"/>
        <dbReference type="ChEBI" id="CHEBI:78531"/>
        <dbReference type="ChEBI" id="CHEBI:456215"/>
        <dbReference type="EC" id="6.1.1.20"/>
    </reaction>
</comment>
<comment type="cofactor">
    <cofactor evidence="1">
        <name>Mg(2+)</name>
        <dbReference type="ChEBI" id="CHEBI:18420"/>
    </cofactor>
    <text evidence="1">Binds 2 magnesium ions per tetramer.</text>
</comment>
<comment type="subunit">
    <text evidence="1">Tetramer of two alpha and two beta subunits.</text>
</comment>
<comment type="subcellular location">
    <subcellularLocation>
        <location evidence="1">Cytoplasm</location>
    </subcellularLocation>
</comment>
<comment type="similarity">
    <text evidence="1">Belongs to the phenylalanyl-tRNA synthetase beta subunit family. Type 1 subfamily.</text>
</comment>
<dbReference type="EC" id="6.1.1.20" evidence="1"/>
<dbReference type="EMBL" id="BX294145">
    <property type="protein sequence ID" value="CAD75185.1"/>
    <property type="molecule type" value="Genomic_DNA"/>
</dbReference>
<dbReference type="RefSeq" id="NP_867638.1">
    <property type="nucleotide sequence ID" value="NC_005027.1"/>
</dbReference>
<dbReference type="RefSeq" id="WP_011121251.1">
    <property type="nucleotide sequence ID" value="NC_005027.1"/>
</dbReference>
<dbReference type="SMR" id="Q7UP77"/>
<dbReference type="FunCoup" id="Q7UP77">
    <property type="interactions" value="439"/>
</dbReference>
<dbReference type="STRING" id="243090.RB7112"/>
<dbReference type="EnsemblBacteria" id="CAD75185">
    <property type="protein sequence ID" value="CAD75185"/>
    <property type="gene ID" value="RB7112"/>
</dbReference>
<dbReference type="KEGG" id="rba:RB7112"/>
<dbReference type="PATRIC" id="fig|243090.15.peg.3442"/>
<dbReference type="eggNOG" id="COG0072">
    <property type="taxonomic scope" value="Bacteria"/>
</dbReference>
<dbReference type="HOGENOM" id="CLU_016891_0_0_0"/>
<dbReference type="InParanoid" id="Q7UP77"/>
<dbReference type="OrthoDB" id="9805455at2"/>
<dbReference type="Proteomes" id="UP000001025">
    <property type="component" value="Chromosome"/>
</dbReference>
<dbReference type="GO" id="GO:0009328">
    <property type="term" value="C:phenylalanine-tRNA ligase complex"/>
    <property type="evidence" value="ECO:0000318"/>
    <property type="project" value="GO_Central"/>
</dbReference>
<dbReference type="GO" id="GO:0005524">
    <property type="term" value="F:ATP binding"/>
    <property type="evidence" value="ECO:0007669"/>
    <property type="project" value="UniProtKB-UniRule"/>
</dbReference>
<dbReference type="GO" id="GO:0000287">
    <property type="term" value="F:magnesium ion binding"/>
    <property type="evidence" value="ECO:0007669"/>
    <property type="project" value="UniProtKB-UniRule"/>
</dbReference>
<dbReference type="GO" id="GO:0004826">
    <property type="term" value="F:phenylalanine-tRNA ligase activity"/>
    <property type="evidence" value="ECO:0007669"/>
    <property type="project" value="UniProtKB-UniRule"/>
</dbReference>
<dbReference type="GO" id="GO:0003723">
    <property type="term" value="F:RNA binding"/>
    <property type="evidence" value="ECO:0007669"/>
    <property type="project" value="InterPro"/>
</dbReference>
<dbReference type="GO" id="GO:0006432">
    <property type="term" value="P:phenylalanyl-tRNA aminoacylation"/>
    <property type="evidence" value="ECO:0000318"/>
    <property type="project" value="GO_Central"/>
</dbReference>
<dbReference type="FunFam" id="3.30.56.10:FF:000002">
    <property type="entry name" value="Phenylalanine--tRNA ligase beta subunit"/>
    <property type="match status" value="1"/>
</dbReference>
<dbReference type="FunFam" id="3.30.56.10:FF:000029">
    <property type="entry name" value="Phenylalanine--tRNA ligase beta subunit"/>
    <property type="match status" value="1"/>
</dbReference>
<dbReference type="FunFam" id="3.50.40.10:FF:000001">
    <property type="entry name" value="Phenylalanine--tRNA ligase beta subunit"/>
    <property type="match status" value="1"/>
</dbReference>
<dbReference type="Gene3D" id="3.30.56.10">
    <property type="match status" value="2"/>
</dbReference>
<dbReference type="Gene3D" id="3.30.930.10">
    <property type="entry name" value="Bira Bifunctional Protein, Domain 2"/>
    <property type="match status" value="1"/>
</dbReference>
<dbReference type="Gene3D" id="3.30.70.380">
    <property type="entry name" value="Ferrodoxin-fold anticodon-binding domain"/>
    <property type="match status" value="1"/>
</dbReference>
<dbReference type="Gene3D" id="3.50.40.10">
    <property type="entry name" value="Phenylalanyl-trna Synthetase, Chain B, domain 3"/>
    <property type="match status" value="1"/>
</dbReference>
<dbReference type="HAMAP" id="MF_00283">
    <property type="entry name" value="Phe_tRNA_synth_beta1"/>
    <property type="match status" value="1"/>
</dbReference>
<dbReference type="InterPro" id="IPR045864">
    <property type="entry name" value="aa-tRNA-synth_II/BPL/LPL"/>
</dbReference>
<dbReference type="InterPro" id="IPR005146">
    <property type="entry name" value="B3/B4_tRNA-bd"/>
</dbReference>
<dbReference type="InterPro" id="IPR009061">
    <property type="entry name" value="DNA-bd_dom_put_sf"/>
</dbReference>
<dbReference type="InterPro" id="IPR005121">
    <property type="entry name" value="Fdx_antiC-bd"/>
</dbReference>
<dbReference type="InterPro" id="IPR036690">
    <property type="entry name" value="Fdx_antiC-bd_sf"/>
</dbReference>
<dbReference type="InterPro" id="IPR045060">
    <property type="entry name" value="Phe-tRNA-ligase_IIc_bsu"/>
</dbReference>
<dbReference type="InterPro" id="IPR004532">
    <property type="entry name" value="Phe-tRNA-ligase_IIc_bsu_bact"/>
</dbReference>
<dbReference type="InterPro" id="IPR020825">
    <property type="entry name" value="Phe-tRNA_synthase-like_B3/B4"/>
</dbReference>
<dbReference type="InterPro" id="IPR041616">
    <property type="entry name" value="PheRS_beta_core"/>
</dbReference>
<dbReference type="InterPro" id="IPR005147">
    <property type="entry name" value="tRNA_synthase_B5-dom"/>
</dbReference>
<dbReference type="NCBIfam" id="TIGR00472">
    <property type="entry name" value="pheT_bact"/>
    <property type="match status" value="1"/>
</dbReference>
<dbReference type="PANTHER" id="PTHR10947:SF0">
    <property type="entry name" value="PHENYLALANINE--TRNA LIGASE BETA SUBUNIT"/>
    <property type="match status" value="1"/>
</dbReference>
<dbReference type="PANTHER" id="PTHR10947">
    <property type="entry name" value="PHENYLALANYL-TRNA SYNTHETASE BETA CHAIN AND LEUCINE-RICH REPEAT-CONTAINING PROTEIN 47"/>
    <property type="match status" value="1"/>
</dbReference>
<dbReference type="Pfam" id="PF03483">
    <property type="entry name" value="B3_4"/>
    <property type="match status" value="1"/>
</dbReference>
<dbReference type="Pfam" id="PF03484">
    <property type="entry name" value="B5"/>
    <property type="match status" value="1"/>
</dbReference>
<dbReference type="Pfam" id="PF03147">
    <property type="entry name" value="FDX-ACB"/>
    <property type="match status" value="1"/>
</dbReference>
<dbReference type="Pfam" id="PF17759">
    <property type="entry name" value="tRNA_synthFbeta"/>
    <property type="match status" value="1"/>
</dbReference>
<dbReference type="SMART" id="SM00873">
    <property type="entry name" value="B3_4"/>
    <property type="match status" value="1"/>
</dbReference>
<dbReference type="SMART" id="SM00874">
    <property type="entry name" value="B5"/>
    <property type="match status" value="1"/>
</dbReference>
<dbReference type="SMART" id="SM00896">
    <property type="entry name" value="FDX-ACB"/>
    <property type="match status" value="1"/>
</dbReference>
<dbReference type="SUPFAM" id="SSF54991">
    <property type="entry name" value="Anticodon-binding domain of PheRS"/>
    <property type="match status" value="1"/>
</dbReference>
<dbReference type="SUPFAM" id="SSF55681">
    <property type="entry name" value="Class II aaRS and biotin synthetases"/>
    <property type="match status" value="1"/>
</dbReference>
<dbReference type="SUPFAM" id="SSF56037">
    <property type="entry name" value="PheT/TilS domain"/>
    <property type="match status" value="1"/>
</dbReference>
<dbReference type="SUPFAM" id="SSF46955">
    <property type="entry name" value="Putative DNA-binding domain"/>
    <property type="match status" value="2"/>
</dbReference>
<dbReference type="PROSITE" id="PS51483">
    <property type="entry name" value="B5"/>
    <property type="match status" value="1"/>
</dbReference>
<dbReference type="PROSITE" id="PS51447">
    <property type="entry name" value="FDX_ACB"/>
    <property type="match status" value="1"/>
</dbReference>
<feature type="chain" id="PRO_0000232818" description="Phenylalanine--tRNA ligase beta subunit">
    <location>
        <begin position="1"/>
        <end position="681"/>
    </location>
</feature>
<feature type="domain" description="B5" evidence="1">
    <location>
        <begin position="288"/>
        <end position="363"/>
    </location>
</feature>
<feature type="domain" description="FDX-ACB" evidence="1">
    <location>
        <begin position="586"/>
        <end position="681"/>
    </location>
</feature>
<feature type="binding site" evidence="1">
    <location>
        <position position="341"/>
    </location>
    <ligand>
        <name>Mg(2+)</name>
        <dbReference type="ChEBI" id="CHEBI:18420"/>
        <note>shared with alpha subunit</note>
    </ligand>
</feature>
<feature type="binding site" evidence="1">
    <location>
        <position position="347"/>
    </location>
    <ligand>
        <name>Mg(2+)</name>
        <dbReference type="ChEBI" id="CHEBI:18420"/>
        <note>shared with alpha subunit</note>
    </ligand>
</feature>
<feature type="binding site" evidence="1">
    <location>
        <position position="350"/>
    </location>
    <ligand>
        <name>Mg(2+)</name>
        <dbReference type="ChEBI" id="CHEBI:18420"/>
        <note>shared with alpha subunit</note>
    </ligand>
</feature>
<feature type="binding site" evidence="1">
    <location>
        <position position="351"/>
    </location>
    <ligand>
        <name>Mg(2+)</name>
        <dbReference type="ChEBI" id="CHEBI:18420"/>
        <note>shared with alpha subunit</note>
    </ligand>
</feature>
<reference key="1">
    <citation type="journal article" date="2003" name="Proc. Natl. Acad. Sci. U.S.A.">
        <title>Complete genome sequence of the marine planctomycete Pirellula sp. strain 1.</title>
        <authorList>
            <person name="Gloeckner F.O."/>
            <person name="Kube M."/>
            <person name="Bauer M."/>
            <person name="Teeling H."/>
            <person name="Lombardot T."/>
            <person name="Ludwig W."/>
            <person name="Gade D."/>
            <person name="Beck A."/>
            <person name="Borzym K."/>
            <person name="Heitmann K."/>
            <person name="Rabus R."/>
            <person name="Schlesner H."/>
            <person name="Amann R."/>
            <person name="Reinhardt R."/>
        </authorList>
    </citation>
    <scope>NUCLEOTIDE SEQUENCE [LARGE SCALE GENOMIC DNA]</scope>
    <source>
        <strain>DSM 10527 / NCIMB 13988 / SH1</strain>
    </source>
</reference>
<accession>Q7UP77</accession>
<sequence length="681" mass="74087">MLVSWKWLSRYVDMTLSHDELVDRLSLSGLNHEGSETVDGDVVIDLEVTSNRGDCLGHIGVAREIAALTDQKLKIPTIEYQESGSAVDDSLAVTNEMPEACPRYTARVIRGVKVGDSPEWLQESLKAVGIGVVNNVVDVTNYVMMECGQPLHAFDLAKVGEGKIVVRPGKEKEQLEAIDHRNYDLNDSTCVIADSSAALAVGGVMGGASSEVTEATADIVLEAAEFVPLSVRRTARRLKLHSPSSFRFERRVDPVGIDWASRRACQLITEIAGGSVAPGVIDTAPEIPARETVLLRPKRVAALLGLEIETAELDKILRSLGCEVSAFADGLQCVPPSWRHDLTREVDLIEEVARIHGYDQIPEDSPIPVAPSSKRRFDTAMERIRGVLTAAGISEAMTPSVVTEKLDQMISPWTELPALQTRTSMLEGARTLRRSLIPSLLQSRAANWASASLVADLFEIAHVYLPAPAGSDSALLPDETYHIGLIAGEDFFALKGTIETLCDRLGIPGELTVGPVQRDGFAKGGAVELTLVGDDAKEPLRLGFLGFVDGKLVKQWKLTGRVVAAELSADVLVNQSRLVPQQQAVSSFPSIQRDLNLVLPESVRWNELAGLVRKAAKERLADLTYRETYRNEKVDGPNKKRVLFSMELQSQTETLSGGDADSIINELVASCEKQLEAVLLR</sequence>
<organism>
    <name type="scientific">Rhodopirellula baltica (strain DSM 10527 / NCIMB 13988 / SH1)</name>
    <dbReference type="NCBI Taxonomy" id="243090"/>
    <lineage>
        <taxon>Bacteria</taxon>
        <taxon>Pseudomonadati</taxon>
        <taxon>Planctomycetota</taxon>
        <taxon>Planctomycetia</taxon>
        <taxon>Pirellulales</taxon>
        <taxon>Pirellulaceae</taxon>
        <taxon>Rhodopirellula</taxon>
    </lineage>
</organism>